<gene>
    <name evidence="1" type="primary">rpoB</name>
    <name type="ordered locus">CTC_02609</name>
</gene>
<evidence type="ECO:0000255" key="1">
    <source>
        <dbReference type="HAMAP-Rule" id="MF_01321"/>
    </source>
</evidence>
<evidence type="ECO:0000256" key="2">
    <source>
        <dbReference type="SAM" id="MobiDB-lite"/>
    </source>
</evidence>
<protein>
    <recommendedName>
        <fullName evidence="1">DNA-directed RNA polymerase subunit beta</fullName>
        <shortName evidence="1">RNAP subunit beta</shortName>
        <ecNumber evidence="1">2.7.7.6</ecNumber>
    </recommendedName>
    <alternativeName>
        <fullName evidence="1">RNA polymerase subunit beta</fullName>
    </alternativeName>
    <alternativeName>
        <fullName evidence="1">Transcriptase subunit beta</fullName>
    </alternativeName>
</protein>
<sequence length="1236" mass="138903">MVHPVQVGKRTRMSFSKIKEVCEMSNLIEVQLDSYEWFLQEGLQEVFDDINPIQDYTGNLSLEFVGYKLDMENIKYSVEECKERDATYAAPLKVSVRLINKETGEIKEQDVFMGDFPLMTEQGTFIINGAERVIVSQLVRSPGVYYDVSLDKSGKELFSATVIPNRGAWLEYETDSNDIIYVRIDKTRKLPISILIRALEYGSDLEIIDYFGEDERLKASIEKDNTKTKEEALLEIYKRLRPGEPPTVDSAMSLIGSLFFDAKRYDLSRVGRYKFNKKLALHLRIANQISAQDIVNPATGEIVVQEGEKIDRDKAIEIQNSGINSVDIQLDDKVLRVIGNNFVDIKSFVKFDIDDLNIKEYVHYPTLKEILDNYSDEEMIKEQIKKNINVLIPKHIIRDDIMSTISYEIGLPYGIGYTDDIDHLGNRRLRSVGELLQNQFRIGLSRMERVVKERMTIQDQDSITPQALINIRPVTASIKEFFGSSQLSQFMDQTNPLSELTHKRRLSALGPGGLSRERAGFEVRDVHHSHYGRMCPIETPEGPNIGLINSLATYAKVNEYGFIETPYRKVDKATGVVTHDIIYMTADEEDHYLIAKANEILNDDGTFIDDKITVRDQEDVLVVPKEEVDFMDVSPRQLVSVATAMIPFLENDDASRALMGSNMQRQAVPLLKPEAPIVGTGIEYKAAVDSAVLPKAKKPGVVTYVSASEIRVKKDKPDSNGDVDKYKLLKFKRSNQGTCINQKPLVSKGDKVDTKTVLADGPSTDLGEIALGKNIRMGFITWEGYNYEDAMLISEELVREDVFTSIHIEEYEAEARDTKLGPEEITRDIPNVGEDALKDIDERGIIRIGAEVRSGDILVGKVTPKGETELTAEERLLRAIFGEKAREVRDTSLRVPHGEAGIIVDVKVFTRENGDELSPGVNKLVRCYIAQKRKISVGDKMAGRHGNKGVISRVLPEEDMPFLPDGRPLQICLNPLGVPSRMNIGQVLEVHLGLAASKLGWHVATPVFDGATEPEIVECLEKAGYEGDGKTVLYDGRTGEPFDNRVTVGYMYILKLAHLVDDKIHARSTGPYSLVTQQPLGGKAQFGGQRFGEMEVWALEAYGAAHTLQEILTVKSDDVVGRVKTYEAIVKGENIPEPGVPESFKVLIKELQALCLDVKVLNDDNEEIAIKELADDDMVELEVNIEGSEDYTEPKQPNDNYLEEEENKDKESDYDEDLNFDDLTKGLQLDDFNDEH</sequence>
<dbReference type="EC" id="2.7.7.6" evidence="1"/>
<dbReference type="EMBL" id="AE015927">
    <property type="protein sequence ID" value="AAO37062.1"/>
    <property type="molecule type" value="Genomic_DNA"/>
</dbReference>
<dbReference type="RefSeq" id="WP_011100723.1">
    <property type="nucleotide sequence ID" value="NC_004557.1"/>
</dbReference>
<dbReference type="SMR" id="Q890N4"/>
<dbReference type="STRING" id="212717.CTC_02609"/>
<dbReference type="GeneID" id="24253478"/>
<dbReference type="KEGG" id="ctc:CTC_02609"/>
<dbReference type="HOGENOM" id="CLU_000524_4_0_9"/>
<dbReference type="OrthoDB" id="9803954at2"/>
<dbReference type="Proteomes" id="UP000001412">
    <property type="component" value="Chromosome"/>
</dbReference>
<dbReference type="GO" id="GO:0000428">
    <property type="term" value="C:DNA-directed RNA polymerase complex"/>
    <property type="evidence" value="ECO:0007669"/>
    <property type="project" value="UniProtKB-KW"/>
</dbReference>
<dbReference type="GO" id="GO:0003677">
    <property type="term" value="F:DNA binding"/>
    <property type="evidence" value="ECO:0007669"/>
    <property type="project" value="UniProtKB-UniRule"/>
</dbReference>
<dbReference type="GO" id="GO:0003899">
    <property type="term" value="F:DNA-directed RNA polymerase activity"/>
    <property type="evidence" value="ECO:0007669"/>
    <property type="project" value="UniProtKB-UniRule"/>
</dbReference>
<dbReference type="GO" id="GO:0032549">
    <property type="term" value="F:ribonucleoside binding"/>
    <property type="evidence" value="ECO:0007669"/>
    <property type="project" value="InterPro"/>
</dbReference>
<dbReference type="GO" id="GO:0006351">
    <property type="term" value="P:DNA-templated transcription"/>
    <property type="evidence" value="ECO:0007669"/>
    <property type="project" value="UniProtKB-UniRule"/>
</dbReference>
<dbReference type="CDD" id="cd00653">
    <property type="entry name" value="RNA_pol_B_RPB2"/>
    <property type="match status" value="1"/>
</dbReference>
<dbReference type="FunFam" id="3.90.1800.10:FF:000001">
    <property type="entry name" value="DNA-directed RNA polymerase subunit beta"/>
    <property type="match status" value="1"/>
</dbReference>
<dbReference type="Gene3D" id="2.40.50.100">
    <property type="match status" value="1"/>
</dbReference>
<dbReference type="Gene3D" id="2.40.50.150">
    <property type="match status" value="1"/>
</dbReference>
<dbReference type="Gene3D" id="3.90.1100.10">
    <property type="match status" value="2"/>
</dbReference>
<dbReference type="Gene3D" id="2.40.270.10">
    <property type="entry name" value="DNA-directed RNA polymerase, subunit 2, domain 6"/>
    <property type="match status" value="1"/>
</dbReference>
<dbReference type="Gene3D" id="3.90.1800.10">
    <property type="entry name" value="RNA polymerase alpha subunit dimerisation domain"/>
    <property type="match status" value="1"/>
</dbReference>
<dbReference type="Gene3D" id="3.90.1110.10">
    <property type="entry name" value="RNA polymerase Rpb2, domain 2"/>
    <property type="match status" value="1"/>
</dbReference>
<dbReference type="HAMAP" id="MF_01321">
    <property type="entry name" value="RNApol_bact_RpoB"/>
    <property type="match status" value="1"/>
</dbReference>
<dbReference type="InterPro" id="IPR019462">
    <property type="entry name" value="DNA-dir_RNA_pol_bsu_external_1"/>
</dbReference>
<dbReference type="InterPro" id="IPR015712">
    <property type="entry name" value="DNA-dir_RNA_pol_su2"/>
</dbReference>
<dbReference type="InterPro" id="IPR007120">
    <property type="entry name" value="DNA-dir_RNAP_su2_dom"/>
</dbReference>
<dbReference type="InterPro" id="IPR037033">
    <property type="entry name" value="DNA-dir_RNAP_su2_hyb_sf"/>
</dbReference>
<dbReference type="InterPro" id="IPR010243">
    <property type="entry name" value="RNA_pol_bsu_bac"/>
</dbReference>
<dbReference type="InterPro" id="IPR007121">
    <property type="entry name" value="RNA_pol_bsu_CS"/>
</dbReference>
<dbReference type="InterPro" id="IPR007644">
    <property type="entry name" value="RNA_pol_bsu_protrusion"/>
</dbReference>
<dbReference type="InterPro" id="IPR007642">
    <property type="entry name" value="RNA_pol_Rpb2_2"/>
</dbReference>
<dbReference type="InterPro" id="IPR037034">
    <property type="entry name" value="RNA_pol_Rpb2_2_sf"/>
</dbReference>
<dbReference type="InterPro" id="IPR007645">
    <property type="entry name" value="RNA_pol_Rpb2_3"/>
</dbReference>
<dbReference type="InterPro" id="IPR007641">
    <property type="entry name" value="RNA_pol_Rpb2_7"/>
</dbReference>
<dbReference type="InterPro" id="IPR014724">
    <property type="entry name" value="RNA_pol_RPB2_OB-fold"/>
</dbReference>
<dbReference type="NCBIfam" id="NF001616">
    <property type="entry name" value="PRK00405.1"/>
    <property type="match status" value="1"/>
</dbReference>
<dbReference type="NCBIfam" id="TIGR02013">
    <property type="entry name" value="rpoB"/>
    <property type="match status" value="1"/>
</dbReference>
<dbReference type="PANTHER" id="PTHR20856">
    <property type="entry name" value="DNA-DIRECTED RNA POLYMERASE I SUBUNIT 2"/>
    <property type="match status" value="1"/>
</dbReference>
<dbReference type="Pfam" id="PF04563">
    <property type="entry name" value="RNA_pol_Rpb2_1"/>
    <property type="match status" value="1"/>
</dbReference>
<dbReference type="Pfam" id="PF04561">
    <property type="entry name" value="RNA_pol_Rpb2_2"/>
    <property type="match status" value="2"/>
</dbReference>
<dbReference type="Pfam" id="PF04565">
    <property type="entry name" value="RNA_pol_Rpb2_3"/>
    <property type="match status" value="1"/>
</dbReference>
<dbReference type="Pfam" id="PF10385">
    <property type="entry name" value="RNA_pol_Rpb2_45"/>
    <property type="match status" value="1"/>
</dbReference>
<dbReference type="Pfam" id="PF00562">
    <property type="entry name" value="RNA_pol_Rpb2_6"/>
    <property type="match status" value="1"/>
</dbReference>
<dbReference type="Pfam" id="PF04560">
    <property type="entry name" value="RNA_pol_Rpb2_7"/>
    <property type="match status" value="1"/>
</dbReference>
<dbReference type="SUPFAM" id="SSF64484">
    <property type="entry name" value="beta and beta-prime subunits of DNA dependent RNA-polymerase"/>
    <property type="match status" value="1"/>
</dbReference>
<dbReference type="PROSITE" id="PS01166">
    <property type="entry name" value="RNA_POL_BETA"/>
    <property type="match status" value="1"/>
</dbReference>
<proteinExistence type="inferred from homology"/>
<feature type="chain" id="PRO_0000047886" description="DNA-directed RNA polymerase subunit beta">
    <location>
        <begin position="1"/>
        <end position="1236"/>
    </location>
</feature>
<feature type="region of interest" description="Disordered" evidence="2">
    <location>
        <begin position="1185"/>
        <end position="1236"/>
    </location>
</feature>
<feature type="compositionally biased region" description="Acidic residues" evidence="2">
    <location>
        <begin position="1201"/>
        <end position="1220"/>
    </location>
</feature>
<reference key="1">
    <citation type="journal article" date="2003" name="Proc. Natl. Acad. Sci. U.S.A.">
        <title>The genome sequence of Clostridium tetani, the causative agent of tetanus disease.</title>
        <authorList>
            <person name="Brueggemann H."/>
            <person name="Baeumer S."/>
            <person name="Fricke W.F."/>
            <person name="Wiezer A."/>
            <person name="Liesegang H."/>
            <person name="Decker I."/>
            <person name="Herzberg C."/>
            <person name="Martinez-Arias R."/>
            <person name="Merkl R."/>
            <person name="Henne A."/>
            <person name="Gottschalk G."/>
        </authorList>
    </citation>
    <scope>NUCLEOTIDE SEQUENCE [LARGE SCALE GENOMIC DNA]</scope>
    <source>
        <strain>Massachusetts / E88</strain>
    </source>
</reference>
<organism>
    <name type="scientific">Clostridium tetani (strain Massachusetts / E88)</name>
    <dbReference type="NCBI Taxonomy" id="212717"/>
    <lineage>
        <taxon>Bacteria</taxon>
        <taxon>Bacillati</taxon>
        <taxon>Bacillota</taxon>
        <taxon>Clostridia</taxon>
        <taxon>Eubacteriales</taxon>
        <taxon>Clostridiaceae</taxon>
        <taxon>Clostridium</taxon>
    </lineage>
</organism>
<comment type="function">
    <text evidence="1">DNA-dependent RNA polymerase catalyzes the transcription of DNA into RNA using the four ribonucleoside triphosphates as substrates.</text>
</comment>
<comment type="catalytic activity">
    <reaction evidence="1">
        <text>RNA(n) + a ribonucleoside 5'-triphosphate = RNA(n+1) + diphosphate</text>
        <dbReference type="Rhea" id="RHEA:21248"/>
        <dbReference type="Rhea" id="RHEA-COMP:14527"/>
        <dbReference type="Rhea" id="RHEA-COMP:17342"/>
        <dbReference type="ChEBI" id="CHEBI:33019"/>
        <dbReference type="ChEBI" id="CHEBI:61557"/>
        <dbReference type="ChEBI" id="CHEBI:140395"/>
        <dbReference type="EC" id="2.7.7.6"/>
    </reaction>
</comment>
<comment type="subunit">
    <text evidence="1">The RNAP catalytic core consists of 2 alpha, 1 beta, 1 beta' and 1 omega subunit. When a sigma factor is associated with the core the holoenzyme is formed, which can initiate transcription.</text>
</comment>
<comment type="similarity">
    <text evidence="1">Belongs to the RNA polymerase beta chain family.</text>
</comment>
<keyword id="KW-0240">DNA-directed RNA polymerase</keyword>
<keyword id="KW-0548">Nucleotidyltransferase</keyword>
<keyword id="KW-1185">Reference proteome</keyword>
<keyword id="KW-0804">Transcription</keyword>
<keyword id="KW-0808">Transferase</keyword>
<accession>Q890N4</accession>
<name>RPOB_CLOTE</name>